<keyword id="KW-0997">Cell inner membrane</keyword>
<keyword id="KW-1003">Cell membrane</keyword>
<keyword id="KW-0472">Membrane</keyword>
<keyword id="KW-0520">NAD</keyword>
<keyword id="KW-0874">Quinone</keyword>
<keyword id="KW-1278">Translocase</keyword>
<keyword id="KW-0813">Transport</keyword>
<keyword id="KW-0830">Ubiquinone</keyword>
<accession>B1YTQ4</accession>
<dbReference type="EC" id="7.1.1.-" evidence="1"/>
<dbReference type="EMBL" id="CP001025">
    <property type="protein sequence ID" value="ACB64642.1"/>
    <property type="molecule type" value="Genomic_DNA"/>
</dbReference>
<dbReference type="RefSeq" id="WP_012364320.1">
    <property type="nucleotide sequence ID" value="NC_010551.1"/>
</dbReference>
<dbReference type="SMR" id="B1YTQ4"/>
<dbReference type="KEGG" id="bac:BamMC406_2163"/>
<dbReference type="HOGENOM" id="CLU_015134_1_1_4"/>
<dbReference type="OrthoDB" id="9801496at2"/>
<dbReference type="Proteomes" id="UP000001680">
    <property type="component" value="Chromosome 1"/>
</dbReference>
<dbReference type="GO" id="GO:0005886">
    <property type="term" value="C:plasma membrane"/>
    <property type="evidence" value="ECO:0007669"/>
    <property type="project" value="UniProtKB-SubCell"/>
</dbReference>
<dbReference type="GO" id="GO:0051287">
    <property type="term" value="F:NAD binding"/>
    <property type="evidence" value="ECO:0007669"/>
    <property type="project" value="InterPro"/>
</dbReference>
<dbReference type="GO" id="GO:0050136">
    <property type="term" value="F:NADH:ubiquinone reductase (non-electrogenic) activity"/>
    <property type="evidence" value="ECO:0007669"/>
    <property type="project" value="UniProtKB-UniRule"/>
</dbReference>
<dbReference type="GO" id="GO:0048038">
    <property type="term" value="F:quinone binding"/>
    <property type="evidence" value="ECO:0007669"/>
    <property type="project" value="UniProtKB-KW"/>
</dbReference>
<dbReference type="FunFam" id="1.10.645.10:FF:000005">
    <property type="entry name" value="NADH-quinone oxidoreductase subunit D"/>
    <property type="match status" value="1"/>
</dbReference>
<dbReference type="Gene3D" id="1.10.645.10">
    <property type="entry name" value="Cytochrome-c3 Hydrogenase, chain B"/>
    <property type="match status" value="1"/>
</dbReference>
<dbReference type="HAMAP" id="MF_01358">
    <property type="entry name" value="NDH1_NuoD"/>
    <property type="match status" value="1"/>
</dbReference>
<dbReference type="InterPro" id="IPR001135">
    <property type="entry name" value="NADH_Q_OxRdtase_suD"/>
</dbReference>
<dbReference type="InterPro" id="IPR014029">
    <property type="entry name" value="NADH_UbQ_OxRdtase_49kDa_CS"/>
</dbReference>
<dbReference type="InterPro" id="IPR022885">
    <property type="entry name" value="NDH1_su_D/H"/>
</dbReference>
<dbReference type="InterPro" id="IPR029014">
    <property type="entry name" value="NiFe-Hase_large"/>
</dbReference>
<dbReference type="NCBIfam" id="TIGR01962">
    <property type="entry name" value="NuoD"/>
    <property type="match status" value="1"/>
</dbReference>
<dbReference type="NCBIfam" id="NF004739">
    <property type="entry name" value="PRK06075.1"/>
    <property type="match status" value="1"/>
</dbReference>
<dbReference type="PANTHER" id="PTHR11993:SF10">
    <property type="entry name" value="NADH DEHYDROGENASE [UBIQUINONE] IRON-SULFUR PROTEIN 2, MITOCHONDRIAL"/>
    <property type="match status" value="1"/>
</dbReference>
<dbReference type="PANTHER" id="PTHR11993">
    <property type="entry name" value="NADH-UBIQUINONE OXIDOREDUCTASE 49 KDA SUBUNIT"/>
    <property type="match status" value="1"/>
</dbReference>
<dbReference type="Pfam" id="PF00346">
    <property type="entry name" value="Complex1_49kDa"/>
    <property type="match status" value="1"/>
</dbReference>
<dbReference type="SUPFAM" id="SSF56762">
    <property type="entry name" value="HydB/Nqo4-like"/>
    <property type="match status" value="1"/>
</dbReference>
<dbReference type="PROSITE" id="PS00535">
    <property type="entry name" value="COMPLEX1_49K"/>
    <property type="match status" value="1"/>
</dbReference>
<gene>
    <name evidence="1" type="primary">nuoD</name>
    <name type="ordered locus">BamMC406_2163</name>
</gene>
<sequence>MAEIKNYTLNFGPQHPAAHGVLRLVLELDGEVIQRADPHIGLLHRATEKLAENKTFIQSVPYMDRLDYVSMMVNEHGYVLAIERLLGIDVPERAQYIRVLFDEITRVLNHLMWIGAHALDVGAMAVFLYAFREREDLMDVYEAVSGARMHAAYYRPGGVYRDLPDAMPQYKASKIRNEKALAKMNEARSGSVLDFIDDFFTRFPKCVDEYETLLTDNRIWKQRLVGIGVVSPERALQMGLTGPMLRGSGIAWDLRKKQPYEVYDRMDFDVPVGVNGDCYDRYLVRVEEMRQSIRIAKQCIEWLRKNPGPVMTDNHKVAPPSRVGMKTNMEDLIHHFKLFTEGFHVPEGEAYAAVEHPKGEFGIYLVSDGANKPYRLKIRAPGFAHLASLDEMARGHMIADAVTIIGTQDIVFGEIDR</sequence>
<name>NUOD_BURA4</name>
<comment type="function">
    <text evidence="1">NDH-1 shuttles electrons from NADH, via FMN and iron-sulfur (Fe-S) centers, to quinones in the respiratory chain. The immediate electron acceptor for the enzyme in this species is believed to be ubiquinone. Couples the redox reaction to proton translocation (for every two electrons transferred, four hydrogen ions are translocated across the cytoplasmic membrane), and thus conserves the redox energy in a proton gradient.</text>
</comment>
<comment type="catalytic activity">
    <reaction evidence="1">
        <text>a quinone + NADH + 5 H(+)(in) = a quinol + NAD(+) + 4 H(+)(out)</text>
        <dbReference type="Rhea" id="RHEA:57888"/>
        <dbReference type="ChEBI" id="CHEBI:15378"/>
        <dbReference type="ChEBI" id="CHEBI:24646"/>
        <dbReference type="ChEBI" id="CHEBI:57540"/>
        <dbReference type="ChEBI" id="CHEBI:57945"/>
        <dbReference type="ChEBI" id="CHEBI:132124"/>
    </reaction>
</comment>
<comment type="subunit">
    <text evidence="1">NDH-1 is composed of 14 different subunits. Subunits NuoB, C, D, E, F, and G constitute the peripheral sector of the complex.</text>
</comment>
<comment type="subcellular location">
    <subcellularLocation>
        <location evidence="1">Cell inner membrane</location>
        <topology evidence="1">Peripheral membrane protein</topology>
        <orientation evidence="1">Cytoplasmic side</orientation>
    </subcellularLocation>
</comment>
<comment type="similarity">
    <text evidence="1">Belongs to the complex I 49 kDa subunit family.</text>
</comment>
<organism>
    <name type="scientific">Burkholderia ambifaria (strain MC40-6)</name>
    <dbReference type="NCBI Taxonomy" id="398577"/>
    <lineage>
        <taxon>Bacteria</taxon>
        <taxon>Pseudomonadati</taxon>
        <taxon>Pseudomonadota</taxon>
        <taxon>Betaproteobacteria</taxon>
        <taxon>Burkholderiales</taxon>
        <taxon>Burkholderiaceae</taxon>
        <taxon>Burkholderia</taxon>
        <taxon>Burkholderia cepacia complex</taxon>
    </lineage>
</organism>
<feature type="chain" id="PRO_0000371823" description="NADH-quinone oxidoreductase subunit D">
    <location>
        <begin position="1"/>
        <end position="417"/>
    </location>
</feature>
<reference key="1">
    <citation type="submission" date="2008-04" db="EMBL/GenBank/DDBJ databases">
        <title>Complete sequence of chromosome 1 of Burkholderia ambifaria MC40-6.</title>
        <authorList>
            <person name="Copeland A."/>
            <person name="Lucas S."/>
            <person name="Lapidus A."/>
            <person name="Glavina del Rio T."/>
            <person name="Dalin E."/>
            <person name="Tice H."/>
            <person name="Pitluck S."/>
            <person name="Chain P."/>
            <person name="Malfatti S."/>
            <person name="Shin M."/>
            <person name="Vergez L."/>
            <person name="Lang D."/>
            <person name="Schmutz J."/>
            <person name="Larimer F."/>
            <person name="Land M."/>
            <person name="Hauser L."/>
            <person name="Kyrpides N."/>
            <person name="Lykidis A."/>
            <person name="Ramette A."/>
            <person name="Konstantinidis K."/>
            <person name="Tiedje J."/>
            <person name="Richardson P."/>
        </authorList>
    </citation>
    <scope>NUCLEOTIDE SEQUENCE [LARGE SCALE GENOMIC DNA]</scope>
    <source>
        <strain>MC40-6</strain>
    </source>
</reference>
<proteinExistence type="inferred from homology"/>
<protein>
    <recommendedName>
        <fullName evidence="1">NADH-quinone oxidoreductase subunit D</fullName>
        <ecNumber evidence="1">7.1.1.-</ecNumber>
    </recommendedName>
    <alternativeName>
        <fullName evidence="1">NADH dehydrogenase I subunit D</fullName>
    </alternativeName>
    <alternativeName>
        <fullName evidence="1">NDH-1 subunit D</fullName>
    </alternativeName>
</protein>
<evidence type="ECO:0000255" key="1">
    <source>
        <dbReference type="HAMAP-Rule" id="MF_01358"/>
    </source>
</evidence>